<accession>Q99715</accession>
<accession>O43853</accession>
<accession>Q15955</accession>
<accession>Q5VYK1</accession>
<accession>Q5VYK2</accession>
<accession>Q71UR3</accession>
<accession>Q99716</accession>
<proteinExistence type="evidence at protein level"/>
<dbReference type="EMBL" id="U73778">
    <property type="protein sequence ID" value="AAC51244.1"/>
    <property type="molecule type" value="mRNA"/>
</dbReference>
<dbReference type="EMBL" id="U73779">
    <property type="protein sequence ID" value="AAD40483.1"/>
    <property type="molecule type" value="mRNA"/>
</dbReference>
<dbReference type="EMBL" id="AL080250">
    <property type="status" value="NOT_ANNOTATED_CDS"/>
    <property type="molecule type" value="Genomic_DNA"/>
</dbReference>
<dbReference type="EMBL" id="AL354664">
    <property type="status" value="NOT_ANNOTATED_CDS"/>
    <property type="molecule type" value="Genomic_DNA"/>
</dbReference>
<dbReference type="EMBL" id="AL096771">
    <property type="status" value="NOT_ANNOTATED_CDS"/>
    <property type="molecule type" value="Genomic_DNA"/>
</dbReference>
<dbReference type="EMBL" id="AF061871">
    <property type="protein sequence ID" value="AAC83578.1"/>
    <property type="molecule type" value="Genomic_DNA"/>
</dbReference>
<dbReference type="EMBL" id="U68139">
    <property type="protein sequence ID" value="AAC01506.1"/>
    <property type="molecule type" value="mRNA"/>
</dbReference>
<dbReference type="EMBL" id="AH004088">
    <property type="protein sequence ID" value="AAB23937.2"/>
    <property type="molecule type" value="Genomic_DNA"/>
</dbReference>
<dbReference type="CCDS" id="CCDS43481.1">
    <molecule id="Q99715-2"/>
</dbReference>
<dbReference type="CCDS" id="CCDS43482.1">
    <molecule id="Q99715-1"/>
</dbReference>
<dbReference type="PIR" id="A44479">
    <property type="entry name" value="A44479"/>
</dbReference>
<dbReference type="RefSeq" id="NP_004361.3">
    <molecule id="Q99715-1"/>
    <property type="nucleotide sequence ID" value="NM_004370.5"/>
</dbReference>
<dbReference type="RefSeq" id="NP_542376.2">
    <molecule id="Q99715-2"/>
    <property type="nucleotide sequence ID" value="NM_080645.3"/>
</dbReference>
<dbReference type="RefSeq" id="XP_047274142.1">
    <molecule id="Q99715-2"/>
    <property type="nucleotide sequence ID" value="XM_047418186.1"/>
</dbReference>
<dbReference type="SMR" id="Q99715"/>
<dbReference type="BioGRID" id="107700">
    <property type="interactions" value="76"/>
</dbReference>
<dbReference type="ComplexPortal" id="CPX-1753">
    <property type="entry name" value="Collagen type XII trimer"/>
</dbReference>
<dbReference type="FunCoup" id="Q99715">
    <property type="interactions" value="415"/>
</dbReference>
<dbReference type="IntAct" id="Q99715">
    <property type="interactions" value="38"/>
</dbReference>
<dbReference type="STRING" id="9606.ENSP00000325146"/>
<dbReference type="GlyConnect" id="1131">
    <property type="glycosylation" value="70 N-Linked glycans (4 sites)"/>
</dbReference>
<dbReference type="GlyCosmos" id="Q99715">
    <property type="glycosylation" value="13 sites, 90 glycans"/>
</dbReference>
<dbReference type="GlyGen" id="Q99715">
    <property type="glycosylation" value="26 sites, 119 N-linked glycans (4 sites), 10 O-linked glycans (15 sites)"/>
</dbReference>
<dbReference type="iPTMnet" id="Q99715"/>
<dbReference type="PhosphoSitePlus" id="Q99715"/>
<dbReference type="BioMuta" id="COL12A1"/>
<dbReference type="DMDM" id="146345397"/>
<dbReference type="jPOST" id="Q99715"/>
<dbReference type="MassIVE" id="Q99715"/>
<dbReference type="PaxDb" id="9606-ENSP00000325146"/>
<dbReference type="PeptideAtlas" id="Q99715"/>
<dbReference type="ProteomicsDB" id="78429">
    <molecule id="Q99715-1"/>
</dbReference>
<dbReference type="ProteomicsDB" id="78430">
    <molecule id="Q99715-2"/>
</dbReference>
<dbReference type="ProteomicsDB" id="78431">
    <molecule id="Q99715-4"/>
</dbReference>
<dbReference type="Pumba" id="Q99715"/>
<dbReference type="Antibodypedia" id="2124">
    <property type="antibodies" value="96 antibodies from 20 providers"/>
</dbReference>
<dbReference type="DNASU" id="1303"/>
<dbReference type="Ensembl" id="ENST00000322507.13">
    <molecule id="Q99715-1"/>
    <property type="protein sequence ID" value="ENSP00000325146.8"/>
    <property type="gene ID" value="ENSG00000111799.22"/>
</dbReference>
<dbReference type="Ensembl" id="ENST00000345356.10">
    <molecule id="Q99715-2"/>
    <property type="protein sequence ID" value="ENSP00000305147.9"/>
    <property type="gene ID" value="ENSG00000111799.22"/>
</dbReference>
<dbReference type="Ensembl" id="ENST00000416123.6">
    <molecule id="Q99715-4"/>
    <property type="protein sequence ID" value="ENSP00000412864.2"/>
    <property type="gene ID" value="ENSG00000111799.22"/>
</dbReference>
<dbReference type="GeneID" id="1303"/>
<dbReference type="KEGG" id="hsa:1303"/>
<dbReference type="MANE-Select" id="ENST00000322507.13">
    <property type="protein sequence ID" value="ENSP00000325146.8"/>
    <property type="RefSeq nucleotide sequence ID" value="NM_004370.6"/>
    <property type="RefSeq protein sequence ID" value="NP_004361.3"/>
</dbReference>
<dbReference type="UCSC" id="uc063ppm.1">
    <molecule id="Q99715-1"/>
    <property type="organism name" value="human"/>
</dbReference>
<dbReference type="AGR" id="HGNC:2188"/>
<dbReference type="CTD" id="1303"/>
<dbReference type="DisGeNET" id="1303"/>
<dbReference type="GeneCards" id="COL12A1"/>
<dbReference type="HGNC" id="HGNC:2188">
    <property type="gene designation" value="COL12A1"/>
</dbReference>
<dbReference type="HPA" id="ENSG00000111799">
    <property type="expression patterns" value="Low tissue specificity"/>
</dbReference>
<dbReference type="MalaCards" id="COL12A1"/>
<dbReference type="MIM" id="120320">
    <property type="type" value="gene"/>
</dbReference>
<dbReference type="MIM" id="616470">
    <property type="type" value="phenotype"/>
</dbReference>
<dbReference type="MIM" id="616471">
    <property type="type" value="phenotype"/>
</dbReference>
<dbReference type="neXtProt" id="NX_Q99715"/>
<dbReference type="OpenTargets" id="ENSG00000111799"/>
<dbReference type="Orphanet" id="610">
    <property type="disease" value="Bethlem muscular dystrophy"/>
</dbReference>
<dbReference type="Orphanet" id="536516">
    <property type="disease" value="Myopathic Ehlers-Danlos syndrome"/>
</dbReference>
<dbReference type="Orphanet" id="75840">
    <property type="disease" value="Ullrich congenital muscular dystrophy"/>
</dbReference>
<dbReference type="PharmGKB" id="PA26704"/>
<dbReference type="VEuPathDB" id="HostDB:ENSG00000111799"/>
<dbReference type="eggNOG" id="KOG3544">
    <property type="taxonomic scope" value="Eukaryota"/>
</dbReference>
<dbReference type="GeneTree" id="ENSGT00940000154923"/>
<dbReference type="HOGENOM" id="CLU_000467_0_0_1"/>
<dbReference type="InParanoid" id="Q99715"/>
<dbReference type="OMA" id="YIIRYKT"/>
<dbReference type="OrthoDB" id="9934270at2759"/>
<dbReference type="PAN-GO" id="Q99715">
    <property type="GO annotations" value="3 GO annotations based on evolutionary models"/>
</dbReference>
<dbReference type="PhylomeDB" id="Q99715"/>
<dbReference type="TreeFam" id="TF329914"/>
<dbReference type="PathwayCommons" id="Q99715"/>
<dbReference type="Reactome" id="R-HSA-1442490">
    <property type="pathway name" value="Collagen degradation"/>
</dbReference>
<dbReference type="Reactome" id="R-HSA-1650814">
    <property type="pathway name" value="Collagen biosynthesis and modifying enzymes"/>
</dbReference>
<dbReference type="Reactome" id="R-HSA-2022090">
    <property type="pathway name" value="Assembly of collagen fibrils and other multimeric structures"/>
</dbReference>
<dbReference type="Reactome" id="R-HSA-8948216">
    <property type="pathway name" value="Collagen chain trimerization"/>
</dbReference>
<dbReference type="SignaLink" id="Q99715"/>
<dbReference type="SIGNOR" id="Q99715"/>
<dbReference type="BioGRID-ORCS" id="1303">
    <property type="hits" value="5 hits in 1148 CRISPR screens"/>
</dbReference>
<dbReference type="ChiTaRS" id="COL12A1">
    <property type="organism name" value="human"/>
</dbReference>
<dbReference type="GeneWiki" id="Collagen,_type_XII,_alpha_1"/>
<dbReference type="GenomeRNAi" id="1303"/>
<dbReference type="Pharos" id="Q99715">
    <property type="development level" value="Tbio"/>
</dbReference>
<dbReference type="PRO" id="PR:Q99715"/>
<dbReference type="Proteomes" id="UP000005640">
    <property type="component" value="Chromosome 6"/>
</dbReference>
<dbReference type="RNAct" id="Q99715">
    <property type="molecule type" value="protein"/>
</dbReference>
<dbReference type="Bgee" id="ENSG00000111799">
    <property type="expression patterns" value="Expressed in tibia and 172 other cell types or tissues"/>
</dbReference>
<dbReference type="ExpressionAtlas" id="Q99715">
    <property type="expression patterns" value="baseline and differential"/>
</dbReference>
<dbReference type="GO" id="GO:0005595">
    <property type="term" value="C:collagen type XII trimer"/>
    <property type="evidence" value="ECO:0000304"/>
    <property type="project" value="ProtInc"/>
</dbReference>
<dbReference type="GO" id="GO:0062023">
    <property type="term" value="C:collagen-containing extracellular matrix"/>
    <property type="evidence" value="ECO:0007005"/>
    <property type="project" value="UniProtKB"/>
</dbReference>
<dbReference type="GO" id="GO:0005788">
    <property type="term" value="C:endoplasmic reticulum lumen"/>
    <property type="evidence" value="ECO:0000304"/>
    <property type="project" value="Reactome"/>
</dbReference>
<dbReference type="GO" id="GO:0070062">
    <property type="term" value="C:extracellular exosome"/>
    <property type="evidence" value="ECO:0007005"/>
    <property type="project" value="UniProtKB"/>
</dbReference>
<dbReference type="GO" id="GO:0005576">
    <property type="term" value="C:extracellular region"/>
    <property type="evidence" value="ECO:0007005"/>
    <property type="project" value="BHF-UCL"/>
</dbReference>
<dbReference type="GO" id="GO:0005615">
    <property type="term" value="C:extracellular space"/>
    <property type="evidence" value="ECO:0007005"/>
    <property type="project" value="BHF-UCL"/>
</dbReference>
<dbReference type="GO" id="GO:1903561">
    <property type="term" value="C:extracellular vesicle"/>
    <property type="evidence" value="ECO:0007005"/>
    <property type="project" value="UniProtKB"/>
</dbReference>
<dbReference type="GO" id="GO:0030020">
    <property type="term" value="F:extracellular matrix structural constituent conferring tensile strength"/>
    <property type="evidence" value="ECO:0000303"/>
    <property type="project" value="UniProtKB"/>
</dbReference>
<dbReference type="GO" id="GO:0007155">
    <property type="term" value="P:cell adhesion"/>
    <property type="evidence" value="ECO:0007669"/>
    <property type="project" value="UniProtKB-KW"/>
</dbReference>
<dbReference type="GO" id="GO:0030199">
    <property type="term" value="P:collagen fibril organization"/>
    <property type="evidence" value="ECO:0000303"/>
    <property type="project" value="UniProtKB"/>
</dbReference>
<dbReference type="GO" id="GO:0035987">
    <property type="term" value="P:endodermal cell differentiation"/>
    <property type="evidence" value="ECO:0000270"/>
    <property type="project" value="UniProtKB"/>
</dbReference>
<dbReference type="CDD" id="cd00063">
    <property type="entry name" value="FN3"/>
    <property type="match status" value="18"/>
</dbReference>
<dbReference type="CDD" id="cd01482">
    <property type="entry name" value="vWA_collagen_alphaI-XII-like"/>
    <property type="match status" value="4"/>
</dbReference>
<dbReference type="FunFam" id="2.60.40.10:FF:000018">
    <property type="entry name" value="collagen alpha-1(XII) chain isoform X1"/>
    <property type="match status" value="8"/>
</dbReference>
<dbReference type="FunFam" id="2.60.40.10:FF:000489">
    <property type="entry name" value="collagen alpha-1(XII) chain isoform X1"/>
    <property type="match status" value="1"/>
</dbReference>
<dbReference type="FunFam" id="2.60.40.10:FF:000554">
    <property type="entry name" value="collagen alpha-1(XII) chain isoform X1"/>
    <property type="match status" value="1"/>
</dbReference>
<dbReference type="FunFam" id="2.60.40.10:FF:000639">
    <property type="entry name" value="collagen alpha-1(XII) chain isoform X1"/>
    <property type="match status" value="1"/>
</dbReference>
<dbReference type="FunFam" id="2.60.40.10:FF:000704">
    <property type="entry name" value="collagen alpha-1(XII) chain isoform X1"/>
    <property type="match status" value="1"/>
</dbReference>
<dbReference type="FunFam" id="2.60.40.10:FF:000816">
    <property type="entry name" value="collagen alpha-1(XII) chain isoform X2"/>
    <property type="match status" value="1"/>
</dbReference>
<dbReference type="FunFam" id="2.60.120.200:FF:000008">
    <property type="entry name" value="Collagen type XII alpha 1 chain"/>
    <property type="match status" value="1"/>
</dbReference>
<dbReference type="FunFam" id="2.60.40.10:FF:000121">
    <property type="entry name" value="Collagen type XII alpha 1 chain"/>
    <property type="match status" value="4"/>
</dbReference>
<dbReference type="FunFam" id="2.60.40.10:FF:000480">
    <property type="entry name" value="Collagen, type XII, alpha 1"/>
    <property type="match status" value="1"/>
</dbReference>
<dbReference type="FunFam" id="3.40.50.410:FF:000001">
    <property type="entry name" value="Collagen, type XII, alpha 1"/>
    <property type="match status" value="4"/>
</dbReference>
<dbReference type="Gene3D" id="2.60.120.200">
    <property type="match status" value="1"/>
</dbReference>
<dbReference type="Gene3D" id="2.60.40.10">
    <property type="entry name" value="Immunoglobulins"/>
    <property type="match status" value="18"/>
</dbReference>
<dbReference type="Gene3D" id="3.40.50.410">
    <property type="entry name" value="von Willebrand factor, type A domain"/>
    <property type="match status" value="4"/>
</dbReference>
<dbReference type="InterPro" id="IPR008160">
    <property type="entry name" value="Collagen"/>
</dbReference>
<dbReference type="InterPro" id="IPR013320">
    <property type="entry name" value="ConA-like_dom_sf"/>
</dbReference>
<dbReference type="InterPro" id="IPR050525">
    <property type="entry name" value="ECM_Assembly_Org"/>
</dbReference>
<dbReference type="InterPro" id="IPR003961">
    <property type="entry name" value="FN3_dom"/>
</dbReference>
<dbReference type="InterPro" id="IPR036116">
    <property type="entry name" value="FN3_sf"/>
</dbReference>
<dbReference type="InterPro" id="IPR013783">
    <property type="entry name" value="Ig-like_fold"/>
</dbReference>
<dbReference type="InterPro" id="IPR048287">
    <property type="entry name" value="TSPN-like_N"/>
</dbReference>
<dbReference type="InterPro" id="IPR002035">
    <property type="entry name" value="VWF_A"/>
</dbReference>
<dbReference type="InterPro" id="IPR036465">
    <property type="entry name" value="vWFA_dom_sf"/>
</dbReference>
<dbReference type="PANTHER" id="PTHR24020">
    <property type="entry name" value="COLLAGEN ALPHA"/>
    <property type="match status" value="1"/>
</dbReference>
<dbReference type="PANTHER" id="PTHR24020:SF17">
    <property type="entry name" value="COLLAGEN ALPHA-1(XII) CHAIN"/>
    <property type="match status" value="1"/>
</dbReference>
<dbReference type="Pfam" id="PF01391">
    <property type="entry name" value="Collagen"/>
    <property type="match status" value="4"/>
</dbReference>
<dbReference type="Pfam" id="PF00041">
    <property type="entry name" value="fn3"/>
    <property type="match status" value="18"/>
</dbReference>
<dbReference type="Pfam" id="PF00092">
    <property type="entry name" value="VWA"/>
    <property type="match status" value="4"/>
</dbReference>
<dbReference type="PRINTS" id="PR00453">
    <property type="entry name" value="VWFADOMAIN"/>
</dbReference>
<dbReference type="SMART" id="SM00060">
    <property type="entry name" value="FN3"/>
    <property type="match status" value="18"/>
</dbReference>
<dbReference type="SMART" id="SM00210">
    <property type="entry name" value="TSPN"/>
    <property type="match status" value="1"/>
</dbReference>
<dbReference type="SMART" id="SM00327">
    <property type="entry name" value="VWA"/>
    <property type="match status" value="4"/>
</dbReference>
<dbReference type="SUPFAM" id="SSF49899">
    <property type="entry name" value="Concanavalin A-like lectins/glucanases"/>
    <property type="match status" value="1"/>
</dbReference>
<dbReference type="SUPFAM" id="SSF49265">
    <property type="entry name" value="Fibronectin type III"/>
    <property type="match status" value="11"/>
</dbReference>
<dbReference type="SUPFAM" id="SSF53300">
    <property type="entry name" value="vWA-like"/>
    <property type="match status" value="4"/>
</dbReference>
<dbReference type="PROSITE" id="PS50853">
    <property type="entry name" value="FN3"/>
    <property type="match status" value="18"/>
</dbReference>
<dbReference type="PROSITE" id="PS50234">
    <property type="entry name" value="VWFA"/>
    <property type="match status" value="4"/>
</dbReference>
<organism>
    <name type="scientific">Homo sapiens</name>
    <name type="common">Human</name>
    <dbReference type="NCBI Taxonomy" id="9606"/>
    <lineage>
        <taxon>Eukaryota</taxon>
        <taxon>Metazoa</taxon>
        <taxon>Chordata</taxon>
        <taxon>Craniata</taxon>
        <taxon>Vertebrata</taxon>
        <taxon>Euteleostomi</taxon>
        <taxon>Mammalia</taxon>
        <taxon>Eutheria</taxon>
        <taxon>Euarchontoglires</taxon>
        <taxon>Primates</taxon>
        <taxon>Haplorrhini</taxon>
        <taxon>Catarrhini</taxon>
        <taxon>Hominidae</taxon>
        <taxon>Homo</taxon>
    </lineage>
</organism>
<gene>
    <name type="primary">COL12A1</name>
    <name type="synonym">COL12A1L</name>
</gene>
<name>COCA1_HUMAN</name>
<keyword id="KW-0025">Alternative splicing</keyword>
<keyword id="KW-0130">Cell adhesion</keyword>
<keyword id="KW-0176">Collagen</keyword>
<keyword id="KW-0912">Congenital muscular dystrophy</keyword>
<keyword id="KW-0903">Direct protein sequencing</keyword>
<keyword id="KW-0225">Disease variant</keyword>
<keyword id="KW-1015">Disulfide bond</keyword>
<keyword id="KW-0272">Extracellular matrix</keyword>
<keyword id="KW-0325">Glycoprotein</keyword>
<keyword id="KW-0379">Hydroxylation</keyword>
<keyword id="KW-0654">Proteoglycan</keyword>
<keyword id="KW-1267">Proteomics identification</keyword>
<keyword id="KW-1185">Reference proteome</keyword>
<keyword id="KW-0677">Repeat</keyword>
<keyword id="KW-0964">Secreted</keyword>
<keyword id="KW-0732">Signal</keyword>
<reference key="1">
    <citation type="journal article" date="1997" name="Genomics">
        <title>Complete primary structure of two splice variants of collagen XII, and assignment of alpha 1(XII) collagen (COL12A1), alpha 1(IX) collagen (COL9A1), and alpha 1(XIX) collagen (COL19A1) to human chromosome 6q12-q13.</title>
        <authorList>
            <person name="Gerecke D.R."/>
            <person name="Olson P.F."/>
            <person name="Koch M."/>
            <person name="Knoll J.H.M."/>
            <person name="Taylor R."/>
            <person name="Hudson D.L."/>
            <person name="Champliaud M.-F."/>
            <person name="Olsen B.R."/>
            <person name="Burgeson R.E."/>
        </authorList>
    </citation>
    <scope>NUCLEOTIDE SEQUENCE [MRNA] (ISOFORMS 1 AND 2)</scope>
    <scope>PROTEIN SEQUENCE OF 1280-1295; 1782-1801 AND 2906-2916</scope>
    <scope>VARIANT SER-3058</scope>
</reference>
<reference key="2">
    <citation type="journal article" date="2003" name="Nature">
        <title>The DNA sequence and analysis of human chromosome 6.</title>
        <authorList>
            <person name="Mungall A.J."/>
            <person name="Palmer S.A."/>
            <person name="Sims S.K."/>
            <person name="Edwards C.A."/>
            <person name="Ashurst J.L."/>
            <person name="Wilming L."/>
            <person name="Jones M.C."/>
            <person name="Horton R."/>
            <person name="Hunt S.E."/>
            <person name="Scott C.E."/>
            <person name="Gilbert J.G.R."/>
            <person name="Clamp M.E."/>
            <person name="Bethel G."/>
            <person name="Milne S."/>
            <person name="Ainscough R."/>
            <person name="Almeida J.P."/>
            <person name="Ambrose K.D."/>
            <person name="Andrews T.D."/>
            <person name="Ashwell R.I.S."/>
            <person name="Babbage A.K."/>
            <person name="Bagguley C.L."/>
            <person name="Bailey J."/>
            <person name="Banerjee R."/>
            <person name="Barker D.J."/>
            <person name="Barlow K.F."/>
            <person name="Bates K."/>
            <person name="Beare D.M."/>
            <person name="Beasley H."/>
            <person name="Beasley O."/>
            <person name="Bird C.P."/>
            <person name="Blakey S.E."/>
            <person name="Bray-Allen S."/>
            <person name="Brook J."/>
            <person name="Brown A.J."/>
            <person name="Brown J.Y."/>
            <person name="Burford D.C."/>
            <person name="Burrill W."/>
            <person name="Burton J."/>
            <person name="Carder C."/>
            <person name="Carter N.P."/>
            <person name="Chapman J.C."/>
            <person name="Clark S.Y."/>
            <person name="Clark G."/>
            <person name="Clee C.M."/>
            <person name="Clegg S."/>
            <person name="Cobley V."/>
            <person name="Collier R.E."/>
            <person name="Collins J.E."/>
            <person name="Colman L.K."/>
            <person name="Corby N.R."/>
            <person name="Coville G.J."/>
            <person name="Culley K.M."/>
            <person name="Dhami P."/>
            <person name="Davies J."/>
            <person name="Dunn M."/>
            <person name="Earthrowl M.E."/>
            <person name="Ellington A.E."/>
            <person name="Evans K.A."/>
            <person name="Faulkner L."/>
            <person name="Francis M.D."/>
            <person name="Frankish A."/>
            <person name="Frankland J."/>
            <person name="French L."/>
            <person name="Garner P."/>
            <person name="Garnett J."/>
            <person name="Ghori M.J."/>
            <person name="Gilby L.M."/>
            <person name="Gillson C.J."/>
            <person name="Glithero R.J."/>
            <person name="Grafham D.V."/>
            <person name="Grant M."/>
            <person name="Gribble S."/>
            <person name="Griffiths C."/>
            <person name="Griffiths M.N.D."/>
            <person name="Hall R."/>
            <person name="Halls K.S."/>
            <person name="Hammond S."/>
            <person name="Harley J.L."/>
            <person name="Hart E.A."/>
            <person name="Heath P.D."/>
            <person name="Heathcott R."/>
            <person name="Holmes S.J."/>
            <person name="Howden P.J."/>
            <person name="Howe K.L."/>
            <person name="Howell G.R."/>
            <person name="Huckle E."/>
            <person name="Humphray S.J."/>
            <person name="Humphries M.D."/>
            <person name="Hunt A.R."/>
            <person name="Johnson C.M."/>
            <person name="Joy A.A."/>
            <person name="Kay M."/>
            <person name="Keenan S.J."/>
            <person name="Kimberley A.M."/>
            <person name="King A."/>
            <person name="Laird G.K."/>
            <person name="Langford C."/>
            <person name="Lawlor S."/>
            <person name="Leongamornlert D.A."/>
            <person name="Leversha M."/>
            <person name="Lloyd C.R."/>
            <person name="Lloyd D.M."/>
            <person name="Loveland J.E."/>
            <person name="Lovell J."/>
            <person name="Martin S."/>
            <person name="Mashreghi-Mohammadi M."/>
            <person name="Maslen G.L."/>
            <person name="Matthews L."/>
            <person name="McCann O.T."/>
            <person name="McLaren S.J."/>
            <person name="McLay K."/>
            <person name="McMurray A."/>
            <person name="Moore M.J.F."/>
            <person name="Mullikin J.C."/>
            <person name="Niblett D."/>
            <person name="Nickerson T."/>
            <person name="Novik K.L."/>
            <person name="Oliver K."/>
            <person name="Overton-Larty E.K."/>
            <person name="Parker A."/>
            <person name="Patel R."/>
            <person name="Pearce A.V."/>
            <person name="Peck A.I."/>
            <person name="Phillimore B.J.C.T."/>
            <person name="Phillips S."/>
            <person name="Plumb R.W."/>
            <person name="Porter K.M."/>
            <person name="Ramsey Y."/>
            <person name="Ranby S.A."/>
            <person name="Rice C.M."/>
            <person name="Ross M.T."/>
            <person name="Searle S.M."/>
            <person name="Sehra H.K."/>
            <person name="Sheridan E."/>
            <person name="Skuce C.D."/>
            <person name="Smith S."/>
            <person name="Smith M."/>
            <person name="Spraggon L."/>
            <person name="Squares S.L."/>
            <person name="Steward C.A."/>
            <person name="Sycamore N."/>
            <person name="Tamlyn-Hall G."/>
            <person name="Tester J."/>
            <person name="Theaker A.J."/>
            <person name="Thomas D.W."/>
            <person name="Thorpe A."/>
            <person name="Tracey A."/>
            <person name="Tromans A."/>
            <person name="Tubby B."/>
            <person name="Wall M."/>
            <person name="Wallis J.M."/>
            <person name="West A.P."/>
            <person name="White S.S."/>
            <person name="Whitehead S.L."/>
            <person name="Whittaker H."/>
            <person name="Wild A."/>
            <person name="Willey D.J."/>
            <person name="Wilmer T.E."/>
            <person name="Wood J.M."/>
            <person name="Wray P.W."/>
            <person name="Wyatt J.C."/>
            <person name="Young L."/>
            <person name="Younger R.M."/>
            <person name="Bentley D.R."/>
            <person name="Coulson A."/>
            <person name="Durbin R.M."/>
            <person name="Hubbard T."/>
            <person name="Sulston J.E."/>
            <person name="Dunham I."/>
            <person name="Rogers J."/>
            <person name="Beck S."/>
        </authorList>
    </citation>
    <scope>NUCLEOTIDE SEQUENCE [LARGE SCALE GENOMIC DNA]</scope>
</reference>
<reference key="3">
    <citation type="journal article" date="1998" name="Eur. J. Biochem.">
        <title>The chick and human collagen alpha1(XII) gene promoter -- activity of highly conserved regions around the first exon and in the first intron.</title>
        <authorList>
            <person name="Chiquet M."/>
            <person name="Mumenthaler U."/>
            <person name="Wittwer M."/>
            <person name="Jin W."/>
            <person name="Koch M."/>
        </authorList>
    </citation>
    <scope>NUCLEOTIDE SEQUENCE [GENOMIC DNA] OF 1-9</scope>
</reference>
<reference key="4">
    <citation type="journal article" date="1997" name="Invest. Ophthalmol. Vis. Sci.">
        <title>Type XII collagen contributes to diversities in human corneal and limbal extracellular matrices.</title>
        <authorList>
            <person name="Wessel H."/>
            <person name="Anderson S."/>
            <person name="Fite D."/>
            <person name="Halvas E."/>
            <person name="Hempel J."/>
            <person name="SundarRaj N."/>
        </authorList>
    </citation>
    <scope>NUCLEOTIDE SEQUENCE [MRNA] OF 299-816 (ISOFORMS 1/4)</scope>
    <scope>TISSUE SPECIFICITY</scope>
    <source>
        <tissue>Cornea</tissue>
    </source>
</reference>
<reference key="5">
    <citation type="journal article" date="1992" name="Genomics">
        <title>The mouse alpha 1(XII) and human alpha 1(XII)-like collagen genes are localized on mouse chromosome 9 and human chromosome 6.</title>
        <authorList>
            <person name="Oh S.P."/>
            <person name="Taylor R.W."/>
            <person name="Gerecke D.R."/>
            <person name="Rochelle J.M."/>
            <person name="Seldin M.F."/>
            <person name="Olsen B.R."/>
        </authorList>
    </citation>
    <scope>NUCLEOTIDE SEQUENCE [GENOMIC DNA] OF 2567-2755 (ISOFORM 4)</scope>
</reference>
<reference key="6">
    <citation type="journal article" date="2009" name="J. Proteome Res.">
        <title>Glycoproteomics analysis of human liver tissue by combination of multiple enzyme digestion and hydrazide chemistry.</title>
        <authorList>
            <person name="Chen R."/>
            <person name="Jiang X."/>
            <person name="Sun D."/>
            <person name="Han G."/>
            <person name="Wang F."/>
            <person name="Ye M."/>
            <person name="Wang L."/>
            <person name="Zou H."/>
        </authorList>
    </citation>
    <scope>GLYCOSYLATION [LARGE SCALE ANALYSIS] AT ASN-2528 AND ASN-2679</scope>
    <source>
        <tissue>Liver</tissue>
    </source>
</reference>
<reference key="7">
    <citation type="journal article" date="2011" name="BMC Syst. Biol.">
        <title>Initial characterization of the human central proteome.</title>
        <authorList>
            <person name="Burkard T.R."/>
            <person name="Planyavsky M."/>
            <person name="Kaupe I."/>
            <person name="Breitwieser F.P."/>
            <person name="Buerckstuemmer T."/>
            <person name="Bennett K.L."/>
            <person name="Superti-Furga G."/>
            <person name="Colinge J."/>
        </authorList>
    </citation>
    <scope>IDENTIFICATION BY MASS SPECTROMETRY [LARGE SCALE ANALYSIS]</scope>
</reference>
<reference key="8">
    <citation type="journal article" date="2014" name="Hum. Mol. Genet.">
        <title>Recessive and dominant mutations in COL12A1 cause a novel EDS/myopathy overlap syndrome in humans and mice.</title>
        <authorList>
            <person name="Zou Y."/>
            <person name="Zwolanek D."/>
            <person name="Izu Y."/>
            <person name="Gandhy S."/>
            <person name="Schreiber G."/>
            <person name="Brockmann K."/>
            <person name="Devoto M."/>
            <person name="Tian Z."/>
            <person name="Hu Y."/>
            <person name="Veit G."/>
            <person name="Meier M."/>
            <person name="Stetefeld J."/>
            <person name="Hicks D."/>
            <person name="Straub V."/>
            <person name="Voermans N.C."/>
            <person name="Birk D.E."/>
            <person name="Barton E.R."/>
            <person name="Koch M."/>
            <person name="Boennemann C.G."/>
        </authorList>
    </citation>
    <scope>INVOLVEMENT IN UCMD2</scope>
    <scope>INVOLVEMENT IN BTHLM2</scope>
    <scope>VARIANT BTHLM2 THR-2334</scope>
</reference>
<reference key="9">
    <citation type="journal article" date="2014" name="Hum. Mol. Genet.">
        <title>Mutations in the collagen XII gene define a new form of extracellular matrix-related myopathy.</title>
        <authorList>
            <person name="Hicks D."/>
            <person name="Farsani G.T."/>
            <person name="Laval S."/>
            <person name="Collins J."/>
            <person name="Sarkozy A."/>
            <person name="Martoni E."/>
            <person name="Shah A."/>
            <person name="Zou Y."/>
            <person name="Koch M."/>
            <person name="Boennemann C.G."/>
            <person name="Roberts M."/>
            <person name="Lochmueller H."/>
            <person name="Bushby K."/>
            <person name="Straub V."/>
        </authorList>
    </citation>
    <scope>INVOLVEMENT IN BTHLM2</scope>
    <scope>VARIANTS BTHLM2 CYS-1965 AND ASP-2786</scope>
    <scope>VARIANTS THR-1738 AND SER-3058</scope>
</reference>
<reference key="10">
    <citation type="journal article" date="2014" name="J. Proteomics">
        <title>An enzyme assisted RP-RPLC approach for in-depth analysis of human liver phosphoproteome.</title>
        <authorList>
            <person name="Bian Y."/>
            <person name="Song C."/>
            <person name="Cheng K."/>
            <person name="Dong M."/>
            <person name="Wang F."/>
            <person name="Huang J."/>
            <person name="Sun D."/>
            <person name="Wang L."/>
            <person name="Ye M."/>
            <person name="Zou H."/>
        </authorList>
    </citation>
    <scope>IDENTIFICATION BY MASS SPECTROMETRY [LARGE SCALE ANALYSIS]</scope>
    <source>
        <tissue>Liver</tissue>
    </source>
</reference>
<reference key="11">
    <citation type="journal article" date="2020" name="Glycobiology">
        <title>An affinity chromatography and glycoproteomics workflow to profile the chondroitin sulfate proteoglycans that interact with malarial VAR2CSA in the placenta and in cancer.</title>
        <authorList>
            <person name="Toledo A.G."/>
            <person name="Pihl J."/>
            <person name="Spliid C.B."/>
            <person name="Persson A."/>
            <person name="Nilsson J."/>
            <person name="Pereira M.A."/>
            <person name="Gustavsson T."/>
            <person name="Choudhary S."/>
            <person name="Oo H.Z."/>
            <person name="Black P.C."/>
            <person name="Daugaard M."/>
            <person name="Esko J.D."/>
            <person name="Larson G."/>
            <person name="Salanti A."/>
            <person name="Clausen T.M."/>
        </authorList>
    </citation>
    <scope>GLYCOSYLATION AT SER-329</scope>
</reference>
<evidence type="ECO:0000250" key="1"/>
<evidence type="ECO:0000255" key="2"/>
<evidence type="ECO:0000255" key="3">
    <source>
        <dbReference type="PROSITE-ProRule" id="PRU00219"/>
    </source>
</evidence>
<evidence type="ECO:0000255" key="4">
    <source>
        <dbReference type="PROSITE-ProRule" id="PRU00316"/>
    </source>
</evidence>
<evidence type="ECO:0000256" key="5">
    <source>
        <dbReference type="SAM" id="MobiDB-lite"/>
    </source>
</evidence>
<evidence type="ECO:0000269" key="6">
    <source>
    </source>
</evidence>
<evidence type="ECO:0000269" key="7">
    <source>
    </source>
</evidence>
<evidence type="ECO:0000269" key="8">
    <source>
    </source>
</evidence>
<evidence type="ECO:0000269" key="9">
    <source>
    </source>
</evidence>
<evidence type="ECO:0000269" key="10">
    <source>
    </source>
</evidence>
<evidence type="ECO:0000269" key="11">
    <source>
    </source>
</evidence>
<evidence type="ECO:0000303" key="12">
    <source>
    </source>
</evidence>
<evidence type="ECO:0000305" key="13"/>
<protein>
    <recommendedName>
        <fullName>Collagen alpha-1(XII) chain</fullName>
    </recommendedName>
</protein>
<comment type="function">
    <text evidence="1">Type XII collagen interacts with type I collagen-containing fibrils, the COL1 domain could be associated with the surface of the fibrils, and the COL2 and NC3 domains may be localized in the perifibrillar matrix.</text>
</comment>
<comment type="subunit">
    <text>Trimer of identical chains each containing 190 kDa of non-triple-helical sequences.</text>
</comment>
<comment type="subcellular location">
    <subcellularLocation>
        <location evidence="1">Secreted</location>
        <location evidence="1">Extracellular space</location>
        <location evidence="1">Extracellular matrix</location>
    </subcellularLocation>
</comment>
<comment type="alternative products">
    <event type="alternative splicing"/>
    <isoform>
        <id>Q99715-1</id>
        <name>1</name>
        <name>Long</name>
        <sequence type="displayed"/>
    </isoform>
    <isoform>
        <id>Q99715-2</id>
        <name>2</name>
        <name>Short</name>
        <sequence type="described" ref="VSP_001149"/>
    </isoform>
    <isoform>
        <id>Q99715-4</id>
        <name>4</name>
        <sequence type="described" ref="VSP_024942"/>
    </isoform>
    <text>The final tissue form of collagen XII may contain homotrimers of either isoform 1 or isoform 2 or any combination of isoform 1 and isoform 2.</text>
</comment>
<comment type="tissue specificity">
    <text evidence="11">Found in collagen I-containing tissues: both isoform 1 and isoform 2 appear in amnion, chorion, skeletal muscle, small intestine, and in cell culture of dermal fibroblasts, keratinocytes and endothelial cells. Only isoform 2 is found in lung, placenta, kidney and a squamous cell carcinoma cell line. Isoform 1 is also present in the corneal epithelial Bowman's membrane (BM) and the interfibrillar matrix of the corneal stroma, but it is not detected in the limbal BM.</text>
</comment>
<comment type="PTM">
    <text evidence="1">The triple-helical tail is stabilized by disulfide bonds at each end.</text>
</comment>
<comment type="PTM">
    <text evidence="1">Hydroxylation on proline residues within the sequence motif, GXPG, is most likely to be 4-hydroxy as this fits the requirement for 4-hydroxylation in vertebrates.</text>
</comment>
<comment type="PTM">
    <text evidence="1">Isoform 1 O-glycosylation; glycosaminoglycan of chondroitin-sulfate type.</text>
</comment>
<comment type="disease" evidence="7">
    <disease id="DI-04486">
        <name>Ullrich congenital muscular dystrophy 2</name>
        <acronym>UCMD2</acronym>
        <description>A form of Ullrich congenital muscular dystrophy, a disease characterized by generalized muscle weakness and striking hypermobility of distal joints in conjunction with variable contractures of more proximal joints and normal intelligence. Additional findings may include kyphoscoliosis, protruded calcanei, and follicular hyperkeratosis (rough skin). More severely affected patients manifest at birth and never achieve independent ambulation, while patients with milder phenotypes might maintain ambulation into adulthood. UCMD2 is a severe, autosomal recessive form with onset at birth.</description>
        <dbReference type="MIM" id="616470"/>
    </disease>
    <text>The disease is caused by variants affecting the gene represented in this entry.</text>
</comment>
<comment type="disease" evidence="7 8">
    <disease id="DI-04487">
        <name>Bethlem myopathy 2</name>
        <acronym>BTHLM2</acronym>
        <description>A form of Bethlem myopathy, a slowly progressive muscular dystrophy characterized by joint contractures, most frequently affecting the elbows and ankles, and muscle weakness and wasting involving the proximal and extensor muscles more than the distal and flexor ones. The clinical onset more often occurs in childhood or adulthood, but it can be prenatal with decreased fetal movements or neonatal with hypotonia. The hallmark of Bethlem myopathy is long finger flexion contractures. BTHLM2 inheritance is autosomal dominant.</description>
        <dbReference type="MIM" id="616471"/>
    </disease>
    <text>The disease is caused by variants affecting the gene represented in this entry.</text>
</comment>
<comment type="similarity">
    <text evidence="13">Belongs to the fibril-associated collagens with interrupted helices (FACIT) family.</text>
</comment>
<feature type="signal peptide" evidence="2">
    <location>
        <begin position="1"/>
        <end position="23"/>
    </location>
</feature>
<feature type="chain" id="PRO_0000005783" description="Collagen alpha-1(XII) chain">
    <location>
        <begin position="24"/>
        <end position="3063"/>
    </location>
</feature>
<feature type="domain" description="Fibronectin type-III 1" evidence="4">
    <location>
        <begin position="27"/>
        <end position="117"/>
    </location>
</feature>
<feature type="domain" description="VWFA 1" evidence="3">
    <location>
        <begin position="140"/>
        <end position="316"/>
    </location>
</feature>
<feature type="domain" description="Fibronectin type-III 2" evidence="4">
    <location>
        <begin position="336"/>
        <end position="426"/>
    </location>
</feature>
<feature type="domain" description="VWFA 2" evidence="3">
    <location>
        <begin position="440"/>
        <end position="616"/>
    </location>
</feature>
<feature type="domain" description="Fibronectin type-III 3" evidence="4">
    <location>
        <begin position="634"/>
        <end position="722"/>
    </location>
</feature>
<feature type="domain" description="Fibronectin type-III 4" evidence="4">
    <location>
        <begin position="725"/>
        <end position="816"/>
    </location>
</feature>
<feature type="domain" description="Fibronectin type-III 5" evidence="4">
    <location>
        <begin position="817"/>
        <end position="905"/>
    </location>
</feature>
<feature type="domain" description="Fibronectin type-III 6" evidence="4">
    <location>
        <begin position="907"/>
        <end position="998"/>
    </location>
</feature>
<feature type="domain" description="Fibronectin type-III 7" evidence="4">
    <location>
        <begin position="999"/>
        <end position="1087"/>
    </location>
</feature>
<feature type="domain" description="Fibronectin type-III 8" evidence="4">
    <location>
        <begin position="1089"/>
        <end position="1179"/>
    </location>
</feature>
<feature type="domain" description="VWFA 3" evidence="3">
    <location>
        <begin position="1199"/>
        <end position="1371"/>
    </location>
</feature>
<feature type="domain" description="Fibronectin type-III 9" evidence="4">
    <location>
        <begin position="1387"/>
        <end position="1476"/>
    </location>
</feature>
<feature type="domain" description="Fibronectin type-III 10" evidence="4">
    <location>
        <begin position="1477"/>
        <end position="1567"/>
    </location>
</feature>
<feature type="domain" description="Fibronectin type-III 11" evidence="4">
    <location>
        <begin position="1568"/>
        <end position="1658"/>
    </location>
</feature>
<feature type="domain" description="Fibronectin type-III 12" evidence="4">
    <location>
        <begin position="1659"/>
        <end position="1754"/>
    </location>
</feature>
<feature type="domain" description="Fibronectin type-III 13" evidence="4">
    <location>
        <begin position="1755"/>
        <end position="1849"/>
    </location>
</feature>
<feature type="domain" description="Fibronectin type-III 14" evidence="4">
    <location>
        <begin position="1850"/>
        <end position="1935"/>
    </location>
</feature>
<feature type="domain" description="Fibronectin type-III 15" evidence="4">
    <location>
        <begin position="1936"/>
        <end position="2026"/>
    </location>
</feature>
<feature type="domain" description="Fibronectin type-III 16" evidence="4">
    <location>
        <begin position="2027"/>
        <end position="2117"/>
    </location>
</feature>
<feature type="domain" description="Fibronectin type-III 17" evidence="4">
    <location>
        <begin position="2118"/>
        <end position="2206"/>
    </location>
</feature>
<feature type="domain" description="Fibronectin type-III 18" evidence="4">
    <location>
        <begin position="2207"/>
        <end position="2294"/>
    </location>
</feature>
<feature type="domain" description="VWFA 4" evidence="3">
    <location>
        <begin position="2323"/>
        <end position="2496"/>
    </location>
</feature>
<feature type="domain" description="Laminin G-like">
    <location>
        <begin position="2520"/>
        <end position="2712"/>
    </location>
</feature>
<feature type="domain" description="Collagen-like 1">
    <location>
        <begin position="2747"/>
        <end position="2798"/>
    </location>
</feature>
<feature type="domain" description="Collagen-like 2">
    <location>
        <begin position="2802"/>
        <end position="2852"/>
    </location>
</feature>
<feature type="domain" description="Collagen-like 3">
    <location>
        <begin position="2853"/>
        <end position="2898"/>
    </location>
</feature>
<feature type="domain" description="Collagen-like 4">
    <location>
        <begin position="2941"/>
        <end position="2990"/>
    </location>
</feature>
<feature type="region of interest" description="Disordered" evidence="5">
    <location>
        <begin position="799"/>
        <end position="830"/>
    </location>
</feature>
<feature type="region of interest" description="Disordered" evidence="5">
    <location>
        <begin position="1077"/>
        <end position="1099"/>
    </location>
</feature>
<feature type="region of interest" description="Disordered" evidence="5">
    <location>
        <begin position="2283"/>
        <end position="2312"/>
    </location>
</feature>
<feature type="region of interest" description="Nonhelical region (NC3)">
    <location>
        <begin position="2451"/>
        <end position="2746"/>
    </location>
</feature>
<feature type="region of interest" description="Disordered" evidence="5">
    <location>
        <begin position="2743"/>
        <end position="2896"/>
    </location>
</feature>
<feature type="region of interest" description="Triple-helical region (COL2) with 1 imperfection">
    <location>
        <begin position="2747"/>
        <end position="2898"/>
    </location>
</feature>
<feature type="region of interest" description="Nonhelical region (NC2)">
    <location>
        <begin position="2899"/>
        <end position="2941"/>
    </location>
</feature>
<feature type="region of interest" description="Disordered" evidence="5">
    <location>
        <begin position="2932"/>
        <end position="3063"/>
    </location>
</feature>
<feature type="region of interest" description="Triple-helical region (COL1) with 2 imperfections">
    <location>
        <begin position="2942"/>
        <end position="3044"/>
    </location>
</feature>
<feature type="region of interest" description="Nonhelical region (NC1)">
    <location>
        <begin position="3045"/>
        <end position="3063"/>
    </location>
</feature>
<feature type="short sequence motif" description="Cell attachment site" evidence="2">
    <location>
        <begin position="862"/>
        <end position="864"/>
    </location>
</feature>
<feature type="short sequence motif" description="Cell attachment site" evidence="2">
    <location>
        <begin position="2779"/>
        <end position="2781"/>
    </location>
</feature>
<feature type="short sequence motif" description="Cell attachment site" evidence="2">
    <location>
        <begin position="2895"/>
        <end position="2897"/>
    </location>
</feature>
<feature type="compositionally biased region" description="Basic and acidic residues" evidence="5">
    <location>
        <begin position="811"/>
        <end position="822"/>
    </location>
</feature>
<feature type="compositionally biased region" description="Polar residues" evidence="5">
    <location>
        <begin position="1079"/>
        <end position="1099"/>
    </location>
</feature>
<feature type="compositionally biased region" description="Pro residues" evidence="5">
    <location>
        <begin position="2299"/>
        <end position="2311"/>
    </location>
</feature>
<feature type="compositionally biased region" description="Pro residues" evidence="5">
    <location>
        <begin position="2784"/>
        <end position="2794"/>
    </location>
</feature>
<feature type="compositionally biased region" description="Low complexity" evidence="5">
    <location>
        <begin position="2817"/>
        <end position="2826"/>
    </location>
</feature>
<feature type="compositionally biased region" description="Pro residues" evidence="5">
    <location>
        <begin position="2828"/>
        <end position="2837"/>
    </location>
</feature>
<feature type="compositionally biased region" description="Pro residues" evidence="5">
    <location>
        <begin position="2853"/>
        <end position="2862"/>
    </location>
</feature>
<feature type="compositionally biased region" description="Low complexity" evidence="5">
    <location>
        <begin position="2864"/>
        <end position="2874"/>
    </location>
</feature>
<feature type="compositionally biased region" description="Pro residues" evidence="5">
    <location>
        <begin position="2941"/>
        <end position="2950"/>
    </location>
</feature>
<feature type="compositionally biased region" description="Gly residues" evidence="5">
    <location>
        <begin position="2957"/>
        <end position="2966"/>
    </location>
</feature>
<feature type="compositionally biased region" description="Low complexity" evidence="5">
    <location>
        <begin position="3006"/>
        <end position="3020"/>
    </location>
</feature>
<feature type="modified residue" description="4-hydroxyproline" evidence="1">
    <location>
        <position position="2944"/>
    </location>
</feature>
<feature type="modified residue" description="4-hydroxyproline" evidence="1">
    <location>
        <position position="2947"/>
    </location>
</feature>
<feature type="modified residue" description="4-hydroxyproline" evidence="1">
    <location>
        <position position="2950"/>
    </location>
</feature>
<feature type="modified residue" description="4-hydroxyproline" evidence="1">
    <location>
        <position position="2959"/>
    </location>
</feature>
<feature type="modified residue" description="4-hydroxyproline" evidence="1">
    <location>
        <position position="2965"/>
    </location>
</feature>
<feature type="modified residue" description="4-hydroxyproline" evidence="1">
    <location>
        <position position="2968"/>
    </location>
</feature>
<feature type="modified residue" description="4-hydroxyproline" evidence="1">
    <location>
        <position position="2971"/>
    </location>
</feature>
<feature type="modified residue" description="4-hydroxyproline" evidence="1">
    <location>
        <position position="2983"/>
    </location>
</feature>
<feature type="modified residue" description="4-hydroxyproline" evidence="1">
    <location>
        <position position="3000"/>
    </location>
</feature>
<feature type="modified residue" description="4-hydroxyproline" evidence="1">
    <location>
        <position position="3003"/>
    </location>
</feature>
<feature type="modified residue" description="4-hydroxyproline" evidence="1">
    <location>
        <position position="3014"/>
    </location>
</feature>
<feature type="modified residue" description="4-hydroxyproline" evidence="1">
    <location>
        <position position="3023"/>
    </location>
</feature>
<feature type="modified residue" description="4-hydroxyproline" evidence="1">
    <location>
        <position position="3026"/>
    </location>
</feature>
<feature type="modified residue" description="4-hydroxyproline" evidence="1">
    <location>
        <position position="3029"/>
    </location>
</feature>
<feature type="glycosylation site" description="O-linked (Xyl...) (chondroitin sulfate) serine" evidence="9">
    <location>
        <position position="329"/>
    </location>
</feature>
<feature type="glycosylation site" description="N-linked (GlcNAc...) asparagine" evidence="2">
    <location>
        <position position="700"/>
    </location>
</feature>
<feature type="glycosylation site" description="O-linked (Xyl...) (chondroitin sulfate) serine" evidence="2">
    <location>
        <position position="798"/>
    </location>
</feature>
<feature type="glycosylation site" description="O-linked (Xyl...) (chondroitin sulfate) serine" evidence="2">
    <location>
        <position position="889"/>
    </location>
</feature>
<feature type="glycosylation site" description="O-linked (Xyl...) (chondroitin sulfate) serine" evidence="2">
    <location>
        <position position="981"/>
    </location>
</feature>
<feature type="glycosylation site" description="N-linked (GlcNAc...) asparagine" evidence="2">
    <location>
        <position position="1763"/>
    </location>
</feature>
<feature type="glycosylation site" description="N-linked (GlcNAc...) asparagine" evidence="2">
    <location>
        <position position="2206"/>
    </location>
</feature>
<feature type="glycosylation site" description="N-linked (GlcNAc...) asparagine" evidence="6">
    <location>
        <position position="2528"/>
    </location>
</feature>
<feature type="glycosylation site" description="N-linked (GlcNAc...) asparagine" evidence="6">
    <location>
        <position position="2679"/>
    </location>
</feature>
<feature type="splice variant" id="VSP_001149" description="In isoform 2." evidence="12">
    <location>
        <begin position="25"/>
        <end position="1188"/>
    </location>
</feature>
<feature type="splice variant" id="VSP_024942" description="In isoform 4." evidence="13">
    <location>
        <begin position="2651"/>
        <end position="2726"/>
    </location>
</feature>
<feature type="sequence variant" id="VAR_048768" description="In dbSNP:rs34730529.">
    <original>A</original>
    <variation>P</variation>
    <location>
        <position position="461"/>
    </location>
</feature>
<feature type="sequence variant" id="VAR_048769" description="In dbSNP:rs240736." evidence="8">
    <original>I</original>
    <variation>T</variation>
    <location>
        <position position="1738"/>
    </location>
</feature>
<feature type="sequence variant" id="VAR_074546" description="In BTHLM2; uncertain significance; dbSNP:rs200487396." evidence="8">
    <original>R</original>
    <variation>C</variation>
    <location>
        <position position="1965"/>
    </location>
</feature>
<feature type="sequence variant" id="VAR_061111" description="In dbSNP:rs34438461.">
    <original>R</original>
    <variation>Q</variation>
    <location>
        <position position="2021"/>
    </location>
</feature>
<feature type="sequence variant" id="VAR_048770" description="In dbSNP:rs35523808.">
    <original>E</original>
    <variation>V</variation>
    <location>
        <position position="2160"/>
    </location>
</feature>
<feature type="sequence variant" id="VAR_074547" description="In BTHLM2; dbSNP:rs796052093." evidence="7">
    <original>I</original>
    <variation>T</variation>
    <location>
        <position position="2334"/>
    </location>
</feature>
<feature type="sequence variant" id="VAR_048771" description="In dbSNP:rs35710072.">
    <original>I</original>
    <variation>V</variation>
    <location>
        <position position="2596"/>
    </location>
</feature>
<feature type="sequence variant" id="VAR_074548" description="In BTHLM2; dbSNP:rs796052094." evidence="8">
    <original>G</original>
    <variation>D</variation>
    <location>
        <position position="2786"/>
    </location>
</feature>
<feature type="sequence variant" id="VAR_061112" description="In dbSNP:rs57396313.">
    <original>Q</original>
    <variation>H</variation>
    <location>
        <position position="3048"/>
    </location>
</feature>
<feature type="sequence variant" id="VAR_074549" description="In dbSNP:rs970547." evidence="8 10">
    <original>G</original>
    <variation>S</variation>
    <location>
        <position position="3058"/>
    </location>
</feature>
<feature type="sequence conflict" description="In Ref. 1; AAC51244." evidence="13" ref="1">
    <original>K</original>
    <variation>E</variation>
    <location>
        <position position="47"/>
    </location>
</feature>
<feature type="sequence conflict" description="In Ref. 4; AAC01506." evidence="13" ref="4">
    <original>IV</original>
    <variation>M</variation>
    <location>
        <begin position="441"/>
        <end position="442"/>
    </location>
</feature>
<feature type="sequence conflict" description="In Ref. 4; AAC01506." evidence="13" ref="4">
    <original>R</original>
    <variation>D</variation>
    <location>
        <position position="581"/>
    </location>
</feature>
<feature type="sequence conflict" description="In Ref. 4; AAC01506." evidence="13" ref="4">
    <original>S</original>
    <variation>N</variation>
    <location>
        <position position="689"/>
    </location>
</feature>
<feature type="sequence conflict" description="In Ref. 4; AAC01506." evidence="13" ref="4">
    <original>W</original>
    <variation>S</variation>
    <location>
        <position position="743"/>
    </location>
</feature>
<feature type="sequence conflict" description="In Ref. 4; AAC01506." evidence="13" ref="4">
    <original>R</original>
    <variation>K</variation>
    <location>
        <position position="749"/>
    </location>
</feature>
<feature type="sequence conflict" description="In Ref. 1; AAC51244." evidence="13" ref="1">
    <original>Y</original>
    <variation>C</variation>
    <location>
        <position position="753"/>
    </location>
</feature>
<feature type="sequence conflict" description="In Ref. 4; AAC01506." evidence="13" ref="4">
    <original>V</original>
    <variation>G</variation>
    <location>
        <position position="813"/>
    </location>
</feature>
<feature type="sequence conflict" description="In Ref. 1; AAC51244." evidence="13" ref="1">
    <original>A</original>
    <variation>D</variation>
    <location>
        <position position="1355"/>
    </location>
</feature>
<feature type="sequence conflict" description="In Ref. 1; AAC51244." evidence="13" ref="1">
    <original>A</original>
    <variation>G</variation>
    <location>
        <position position="1690"/>
    </location>
</feature>
<feature type="sequence conflict" description="In Ref. 1; AAC51244." evidence="13" ref="1">
    <original>P</original>
    <variation>A</variation>
    <location>
        <position position="1729"/>
    </location>
</feature>
<feature type="sequence conflict" description="In Ref. 1; AAC51244." evidence="13" ref="1">
    <original>SLD</original>
    <variation>RLG</variation>
    <location>
        <begin position="1949"/>
        <end position="1951"/>
    </location>
</feature>
<feature type="sequence conflict" description="In Ref. 5; AAB23937." evidence="13" ref="5">
    <original>P</original>
    <variation>S</variation>
    <location>
        <position position="2614"/>
    </location>
</feature>
<feature type="sequence conflict" description="In Ref. 5; AAB23937." evidence="13" ref="5">
    <original>SF</original>
    <variation>RK</variation>
    <location>
        <begin position="2647"/>
        <end position="2648"/>
    </location>
</feature>
<feature type="sequence conflict" description="In Ref. 1; AAC51244." evidence="13" ref="1">
    <original>G</original>
    <variation>S</variation>
    <location>
        <position position="2848"/>
    </location>
</feature>
<feature type="sequence conflict" description="In Ref. 1; AAC51244." evidence="13" ref="1">
    <original>P</original>
    <variation>R</variation>
    <location>
        <position position="2858"/>
    </location>
</feature>
<feature type="sequence conflict" description="In Ref. 1; AAC51244." evidence="13" ref="1">
    <original>R</original>
    <variation>Q</variation>
    <location>
        <position position="3035"/>
    </location>
</feature>
<sequence>MRSRLPPALAALGAALLLSSIEAEVDPPSDLNFKIIDENTVHMSWAKPVDPIVGYRITVDPTTDGPTKEFTLSASTTETLLSELVPETEYVVTITSYDEVEESVPVIGQLTIQTGSSTKPVEKKPGKTEIQKCSVSAWTDLVFLVDGSWSVGRNNFKYILDFIAALVSAFDIGEEKTRVGVVQYSSDTRTEFNLNQYYQRDELLAAIKKIPYKGGNTMTGDAIDYLVKNTFTESAGARVGFPKVAIIITDGKSQDEVEIPARELRNVGVEVFSLGIKAADAKELKQIASTPSLNHVFNVANFDAIVDIQNEIISQVCSGVDEQLGELVSGEEVVEPPSNLIAMEVSSKYVKLNWNPSPSPVTGYKVILTPMTAGSRQHALSVGPQTTTLSVRDLSADTEYQISVSAMKGMTSSEPISIMEKTQPMKVQVECSRGVDIKADIVFLVDGSYSIGIANFVKVRAFLEVLVKSFEISPNRVQISLVQYSRDPHTEFTLKKFTKVEDIIEAINTFPYRGGSTNTGKAMTYVREKIFVPSKGSRSNVPKVMILITDGKSSDAFRDPAIKLRNSDVEIFAVGVKDAVRSELEAIASPPAETHVFTVEDFDAFQRISFELTQSICLRIEQELAAIKKKAYVPPKDLSFSEVTSYGFKTNWSPAGENVFSYHITYKEAAGDDEVTVVEPASSTSVVLSSLKPETLYLVNVTAEYEDGFSIPLAGEETTEEVKGAPRNLKVTDETTDSFKITWTQAPGRVLRYRIIYRPVAGGESREVTTPPNQRRRTLENLIPDTKYEVSVIPEYFSGPGTPLTGNAATEEVRGNPRDLRVSDPTTSTMKLSWSGAPGKVKQYLVTYTPVAGGETQEVTVRGDTTNTVLQGLKEGTQYALSVTALYASGAGDALFGEGTTLEERGSPQDLVTKDITDTSIGAYWTSAPGMVRGYRVSWKSLYDDVDTGEKNLPEDAIHTMIENLQPETKYRISVFATYSSGEGEPLTGDATTELSQDSKTLKVDEETENTMRVTWKPAPGKVVNYRVVYRPHGRGKQMVAKVPPTVTSTVLKRLQPQTTYDITVLPIYKMGEGKLRQGSGTTASRFKSPRNLKTSDPTMSSFRVTWEPAPGEVKGYKVTFHPTGDDRRLGELVVGPYDNTVVLEELRAGTTYKVNVFGMFDGGESSPLVGQEMTTLSDTTVMPILSSGMECLTRAEADIVLLVDGSWSIGRANFRTVRSFISRIVEVFDIGPKRVQIALAQYSGDPRTEWQLNAHRDKKSLLQAVANLPYKGGNTLTGMALNFIRQQNFRTQAGMRPRARKIGVLITDGKSQDDVEAPSKKLKDEGVELFAIGIKNADEVELKMIATDPDDTHAYNVADFESLSRIVDDLTINLCNSVKGPGDLEAPSNLVISERTHRSFRVSWTPPSDSVDRYKVEYYPVSGGKRQEFYVSRMETSTVLKDLKPETEYVVNVYSVVEDEYSEPLKGTEKTLPVPVVSLNIYDVGPTTMHVQWQPVGGATGYILSYKPVKDTEPTRPKEVRLGPTVNDMQLTDLVPNTEYAVTVQAVLHDLTSEPVTVREVTLPLPRPQDLKLRDVTHSTMNVFWEPVPGKVRKYIVRYKTPEEDVKEVEVDRSETSTSLKDLFSQTLYTVSVSAVHDEGESPPVTAQETTRPVPAPTNLKITEVTSEGFRGTWDHGASDVSLYRITWAPFGSSDKMETILNGDENTLVFENLNPNTIYEVSITAIYPDESESDDLIGSERTLPILTTQAPKSGPRNLQVYNATSNSLTVKWDPASGRVQKYRITYQPSTGEGNEQTTTIGGRQNSVVLQKLKPDTPYTITVSSLYPDGEGGRMTGRGKTKPLNTVRNLRVYDPSTSTLNVRWDHAEGNPRQYKLFYAPAAGGPEELVPIPGNTNYAILRNLQPDTSYTVTVVPVYTEGDGGRTSDTGRTLMRGLARNVQVYNPTPNSLDVRWDPAPGPVLQYRVVYSPVDGTRPSESIVVPGNTRMVHLERLIPDTLYSVNLVALYSDGEGNPSPAQGRTLPRSGPRNLRVFGETTNSLSVAWDHADGPVQQYRIIYSPTVGDPIDEYTTVPGRRNNVILQPLQPDTPYKITVIAVYEDGDGGHLTGNGRTVGLLPPQNIHISDEWYTRFRVSWDPSPSPVLGYKIVYKPVGSNEPMEAFVGEMTSYTLHNLNPSTTYDVNVYAQYDSGLSVPLTDQGTTLYLNVTDLKTYQIGWDTFCVKWSPHRAATSYRLKLSPADGTRGQEITVRGSETSHCFTGLSPDTDYGVTVFVQTPNLEGPGVSVKEHTTVKPTEAPTEPPTPPPPPTIPPARDVCKGAKADIVFLTDASWSIGDDNFNKVVKFIFNTVGGFDEISPAGIQVSFVQYSDEVKSEFKLNTYNDKALALGALQNIRYRGGNTRTGKALTFIKEKVLTWESGMRKNVPKVLVVVTDGRSQDEVKKAALVIQQSGFSVFVVGVADVDYNELANIASKPSERHVFIVDDFESFEKIEDNLITFVCETATSSCPLIYLDGYTSPGFKMLEAYNLTEKNFASVQGVSLESGSFPSYSAYRIQKNAFVNQPTADLHPNGLPPSYTIILLFRLLPETPSDPFAIWQITDRDYKPQVGVIADPSSKTLSFFNKDTRGEVQTVTFDTEEVKTLFYGSFHKVHIVVTSKSVKIYIDCYEIIEKDIKEAGNITTDGYEILGKLLKGERKSAAFQIQSFDIVCSPVWTSRDRCCDIPSRRDEGKCPAFPNSCTCTQDSVGPPGPPGPAGGPGAKGPRGERGISGAIGPPGPRGDIGPPGPQGPPGPQGPNGLSIPGEQGRQGMKGDAGEPGLPGRTGTPGLPGPPGPMGPPGDRGFTGKDGAMGPRGPPGPPGSPGSPGVTGPSGKPGKPGDHGRPGPSGLKGEKGDRGDIASQNMMRAVARQVCEQLISGQMNRFNQMLNQIPNDYQSSRNQPGPPGPPGPPGSAGARGEPGPGGRPGFPGTPGMQGPPGERGLPGEKGERGTGSSGPRGLPGPPGPQGESRTGPPGSTGSRGPPGPPGRPGNSGIRGPPGPPGYCDSSQCASIPYNGQGYPGSG</sequence>